<keyword id="KW-0028">Amino-acid biosynthesis</keyword>
<keyword id="KW-0055">Arginine biosynthesis</keyword>
<keyword id="KW-0067">ATP-binding</keyword>
<keyword id="KW-0963">Cytoplasm</keyword>
<keyword id="KW-0418">Kinase</keyword>
<keyword id="KW-0547">Nucleotide-binding</keyword>
<keyword id="KW-0808">Transferase</keyword>
<reference key="1">
    <citation type="submission" date="2006-09" db="EMBL/GenBank/DDBJ databases">
        <authorList>
            <consortium name="The Klebsiella pneumonia Genome Sequencing Project"/>
            <person name="McClelland M."/>
            <person name="Sanderson E.K."/>
            <person name="Spieth J."/>
            <person name="Clifton W.S."/>
            <person name="Latreille P."/>
            <person name="Sabo A."/>
            <person name="Pepin K."/>
            <person name="Bhonagiri V."/>
            <person name="Porwollik S."/>
            <person name="Ali J."/>
            <person name="Wilson R.K."/>
        </authorList>
    </citation>
    <scope>NUCLEOTIDE SEQUENCE [LARGE SCALE GENOMIC DNA]</scope>
    <source>
        <strain>ATCC 700721 / MGH 78578</strain>
    </source>
</reference>
<feature type="chain" id="PRO_1000010502" description="Acetylglutamate kinase">
    <location>
        <begin position="1"/>
        <end position="258"/>
    </location>
</feature>
<feature type="binding site" evidence="1">
    <location>
        <begin position="44"/>
        <end position="45"/>
    </location>
    <ligand>
        <name>substrate</name>
    </ligand>
</feature>
<feature type="binding site" evidence="1">
    <location>
        <position position="66"/>
    </location>
    <ligand>
        <name>substrate</name>
    </ligand>
</feature>
<feature type="binding site" evidence="1">
    <location>
        <position position="158"/>
    </location>
    <ligand>
        <name>substrate</name>
    </ligand>
</feature>
<feature type="binding site" evidence="1">
    <location>
        <begin position="181"/>
        <end position="186"/>
    </location>
    <ligand>
        <name>ATP</name>
        <dbReference type="ChEBI" id="CHEBI:30616"/>
    </ligand>
</feature>
<feature type="binding site" evidence="1">
    <location>
        <begin position="209"/>
        <end position="211"/>
    </location>
    <ligand>
        <name>ATP</name>
        <dbReference type="ChEBI" id="CHEBI:30616"/>
    </ligand>
</feature>
<feature type="site" description="Transition state stabilizer" evidence="1">
    <location>
        <position position="8"/>
    </location>
</feature>
<feature type="site" description="Transition state stabilizer" evidence="1">
    <location>
        <position position="217"/>
    </location>
</feature>
<dbReference type="EC" id="2.7.2.8" evidence="1"/>
<dbReference type="EMBL" id="CP000647">
    <property type="protein sequence ID" value="ABR79627.1"/>
    <property type="molecule type" value="Genomic_DNA"/>
</dbReference>
<dbReference type="SMR" id="A6TGE3"/>
<dbReference type="STRING" id="272620.KPN_04248"/>
<dbReference type="PaxDb" id="272620-KPN_04248"/>
<dbReference type="EnsemblBacteria" id="ABR79627">
    <property type="protein sequence ID" value="ABR79627"/>
    <property type="gene ID" value="KPN_04248"/>
</dbReference>
<dbReference type="KEGG" id="kpn:KPN_04248"/>
<dbReference type="HOGENOM" id="CLU_053680_1_1_6"/>
<dbReference type="UniPathway" id="UPA00068">
    <property type="reaction ID" value="UER00107"/>
</dbReference>
<dbReference type="Proteomes" id="UP000000265">
    <property type="component" value="Chromosome"/>
</dbReference>
<dbReference type="GO" id="GO:0005737">
    <property type="term" value="C:cytoplasm"/>
    <property type="evidence" value="ECO:0007669"/>
    <property type="project" value="UniProtKB-SubCell"/>
</dbReference>
<dbReference type="GO" id="GO:0003991">
    <property type="term" value="F:acetylglutamate kinase activity"/>
    <property type="evidence" value="ECO:0007669"/>
    <property type="project" value="UniProtKB-UniRule"/>
</dbReference>
<dbReference type="GO" id="GO:0005524">
    <property type="term" value="F:ATP binding"/>
    <property type="evidence" value="ECO:0007669"/>
    <property type="project" value="UniProtKB-UniRule"/>
</dbReference>
<dbReference type="GO" id="GO:0042450">
    <property type="term" value="P:arginine biosynthetic process via ornithine"/>
    <property type="evidence" value="ECO:0007669"/>
    <property type="project" value="UniProtKB-UniRule"/>
</dbReference>
<dbReference type="GO" id="GO:0006526">
    <property type="term" value="P:L-arginine biosynthetic process"/>
    <property type="evidence" value="ECO:0007669"/>
    <property type="project" value="UniProtKB-UniPathway"/>
</dbReference>
<dbReference type="CDD" id="cd04249">
    <property type="entry name" value="AAK_NAGK-NC"/>
    <property type="match status" value="1"/>
</dbReference>
<dbReference type="FunFam" id="3.40.1160.10:FF:000008">
    <property type="entry name" value="Acetylglutamate kinase"/>
    <property type="match status" value="1"/>
</dbReference>
<dbReference type="Gene3D" id="3.40.1160.10">
    <property type="entry name" value="Acetylglutamate kinase-like"/>
    <property type="match status" value="1"/>
</dbReference>
<dbReference type="HAMAP" id="MF_00082">
    <property type="entry name" value="ArgB"/>
    <property type="match status" value="1"/>
</dbReference>
<dbReference type="InterPro" id="IPR036393">
    <property type="entry name" value="AceGlu_kinase-like_sf"/>
</dbReference>
<dbReference type="InterPro" id="IPR004662">
    <property type="entry name" value="AcgluKinase_fam"/>
</dbReference>
<dbReference type="InterPro" id="IPR037528">
    <property type="entry name" value="ArgB"/>
</dbReference>
<dbReference type="InterPro" id="IPR001048">
    <property type="entry name" value="Asp/Glu/Uridylate_kinase"/>
</dbReference>
<dbReference type="InterPro" id="IPR041731">
    <property type="entry name" value="NAGK-NC"/>
</dbReference>
<dbReference type="NCBIfam" id="TIGR00761">
    <property type="entry name" value="argB"/>
    <property type="match status" value="1"/>
</dbReference>
<dbReference type="PANTHER" id="PTHR23342">
    <property type="entry name" value="N-ACETYLGLUTAMATE SYNTHASE"/>
    <property type="match status" value="1"/>
</dbReference>
<dbReference type="PANTHER" id="PTHR23342:SF0">
    <property type="entry name" value="N-ACETYLGLUTAMATE SYNTHASE, MITOCHONDRIAL"/>
    <property type="match status" value="1"/>
</dbReference>
<dbReference type="Pfam" id="PF00696">
    <property type="entry name" value="AA_kinase"/>
    <property type="match status" value="1"/>
</dbReference>
<dbReference type="PIRSF" id="PIRSF000728">
    <property type="entry name" value="NAGK"/>
    <property type="match status" value="1"/>
</dbReference>
<dbReference type="SUPFAM" id="SSF53633">
    <property type="entry name" value="Carbamate kinase-like"/>
    <property type="match status" value="1"/>
</dbReference>
<organism>
    <name type="scientific">Klebsiella pneumoniae subsp. pneumoniae (strain ATCC 700721 / MGH 78578)</name>
    <dbReference type="NCBI Taxonomy" id="272620"/>
    <lineage>
        <taxon>Bacteria</taxon>
        <taxon>Pseudomonadati</taxon>
        <taxon>Pseudomonadota</taxon>
        <taxon>Gammaproteobacteria</taxon>
        <taxon>Enterobacterales</taxon>
        <taxon>Enterobacteriaceae</taxon>
        <taxon>Klebsiella/Raoultella group</taxon>
        <taxon>Klebsiella</taxon>
        <taxon>Klebsiella pneumoniae complex</taxon>
    </lineage>
</organism>
<accession>A6TGE3</accession>
<comment type="function">
    <text evidence="1">Catalyzes the ATP-dependent phosphorylation of N-acetyl-L-glutamate.</text>
</comment>
<comment type="catalytic activity">
    <reaction evidence="1">
        <text>N-acetyl-L-glutamate + ATP = N-acetyl-L-glutamyl 5-phosphate + ADP</text>
        <dbReference type="Rhea" id="RHEA:14629"/>
        <dbReference type="ChEBI" id="CHEBI:30616"/>
        <dbReference type="ChEBI" id="CHEBI:44337"/>
        <dbReference type="ChEBI" id="CHEBI:57936"/>
        <dbReference type="ChEBI" id="CHEBI:456216"/>
        <dbReference type="EC" id="2.7.2.8"/>
    </reaction>
</comment>
<comment type="pathway">
    <text evidence="1">Amino-acid biosynthesis; L-arginine biosynthesis; N(2)-acetyl-L-ornithine from L-glutamate: step 2/4.</text>
</comment>
<comment type="subunit">
    <text evidence="1">Homodimer.</text>
</comment>
<comment type="subcellular location">
    <subcellularLocation>
        <location evidence="1">Cytoplasm</location>
    </subcellularLocation>
</comment>
<comment type="similarity">
    <text evidence="1">Belongs to the acetylglutamate kinase family. ArgB subfamily.</text>
</comment>
<proteinExistence type="inferred from homology"/>
<name>ARGB_KLEP7</name>
<gene>
    <name evidence="1" type="primary">argB</name>
    <name type="ordered locus">KPN78578_42030</name>
    <name type="ORF">KPN_04248</name>
</gene>
<sequence length="258" mass="27011">MMNPLIIKLGGVLLDSEEALERLFTALVNYREAHQRPLIIVHGGGCVVDELMKQLNLPVQKKNGLRVTPAEQIDIITGALAGTANKTLLAWAKKHGISSVGLFLGDGDSVKVTQLDAELGHVGLAQPGSPTLINTLLAGGYLPVVSSIGVTDEGQLMNVNADQAATALAATLGADLILLSDVSGILDGKGQRIAEMTAEKAEQLIEQGIITDGMIVKVNAALDAARALGRPVDIASWRHAEQLPALFNGTPIGTRILA</sequence>
<protein>
    <recommendedName>
        <fullName evidence="1">Acetylglutamate kinase</fullName>
        <ecNumber evidence="1">2.7.2.8</ecNumber>
    </recommendedName>
    <alternativeName>
        <fullName evidence="1">N-acetyl-L-glutamate 5-phosphotransferase</fullName>
    </alternativeName>
    <alternativeName>
        <fullName evidence="1">NAG kinase</fullName>
        <shortName evidence="1">NAGK</shortName>
    </alternativeName>
</protein>
<evidence type="ECO:0000255" key="1">
    <source>
        <dbReference type="HAMAP-Rule" id="MF_00082"/>
    </source>
</evidence>